<comment type="subcellular location">
    <subcellularLocation>
        <location evidence="2">Cell membrane</location>
        <topology evidence="2">Multi-pass membrane protein</topology>
    </subcellularLocation>
</comment>
<gene>
    <name type="primary">yitR</name>
    <name type="ordered locus">BSU11090</name>
</gene>
<reference key="1">
    <citation type="journal article" date="1997" name="Microbiology">
        <title>A Bacillus subtilis chromosome segment at the 100 degrees to 102 degrees position encoding 11 membrane proteins.</title>
        <authorList>
            <person name="Roche B."/>
            <person name="Autret S."/>
            <person name="Levine A."/>
            <person name="Vannier F."/>
            <person name="Medina N."/>
            <person name="Seror S.J."/>
        </authorList>
    </citation>
    <scope>NUCLEOTIDE SEQUENCE [GENOMIC DNA]</scope>
</reference>
<reference key="2">
    <citation type="journal article" date="1997" name="Nature">
        <title>The complete genome sequence of the Gram-positive bacterium Bacillus subtilis.</title>
        <authorList>
            <person name="Kunst F."/>
            <person name="Ogasawara N."/>
            <person name="Moszer I."/>
            <person name="Albertini A.M."/>
            <person name="Alloni G."/>
            <person name="Azevedo V."/>
            <person name="Bertero M.G."/>
            <person name="Bessieres P."/>
            <person name="Bolotin A."/>
            <person name="Borchert S."/>
            <person name="Borriss R."/>
            <person name="Boursier L."/>
            <person name="Brans A."/>
            <person name="Braun M."/>
            <person name="Brignell S.C."/>
            <person name="Bron S."/>
            <person name="Brouillet S."/>
            <person name="Bruschi C.V."/>
            <person name="Caldwell B."/>
            <person name="Capuano V."/>
            <person name="Carter N.M."/>
            <person name="Choi S.-K."/>
            <person name="Codani J.-J."/>
            <person name="Connerton I.F."/>
            <person name="Cummings N.J."/>
            <person name="Daniel R.A."/>
            <person name="Denizot F."/>
            <person name="Devine K.M."/>
            <person name="Duesterhoeft A."/>
            <person name="Ehrlich S.D."/>
            <person name="Emmerson P.T."/>
            <person name="Entian K.-D."/>
            <person name="Errington J."/>
            <person name="Fabret C."/>
            <person name="Ferrari E."/>
            <person name="Foulger D."/>
            <person name="Fritz C."/>
            <person name="Fujita M."/>
            <person name="Fujita Y."/>
            <person name="Fuma S."/>
            <person name="Galizzi A."/>
            <person name="Galleron N."/>
            <person name="Ghim S.-Y."/>
            <person name="Glaser P."/>
            <person name="Goffeau A."/>
            <person name="Golightly E.J."/>
            <person name="Grandi G."/>
            <person name="Guiseppi G."/>
            <person name="Guy B.J."/>
            <person name="Haga K."/>
            <person name="Haiech J."/>
            <person name="Harwood C.R."/>
            <person name="Henaut A."/>
            <person name="Hilbert H."/>
            <person name="Holsappel S."/>
            <person name="Hosono S."/>
            <person name="Hullo M.-F."/>
            <person name="Itaya M."/>
            <person name="Jones L.-M."/>
            <person name="Joris B."/>
            <person name="Karamata D."/>
            <person name="Kasahara Y."/>
            <person name="Klaerr-Blanchard M."/>
            <person name="Klein C."/>
            <person name="Kobayashi Y."/>
            <person name="Koetter P."/>
            <person name="Koningstein G."/>
            <person name="Krogh S."/>
            <person name="Kumano M."/>
            <person name="Kurita K."/>
            <person name="Lapidus A."/>
            <person name="Lardinois S."/>
            <person name="Lauber J."/>
            <person name="Lazarevic V."/>
            <person name="Lee S.-M."/>
            <person name="Levine A."/>
            <person name="Liu H."/>
            <person name="Masuda S."/>
            <person name="Mauel C."/>
            <person name="Medigue C."/>
            <person name="Medina N."/>
            <person name="Mellado R.P."/>
            <person name="Mizuno M."/>
            <person name="Moestl D."/>
            <person name="Nakai S."/>
            <person name="Noback M."/>
            <person name="Noone D."/>
            <person name="O'Reilly M."/>
            <person name="Ogawa K."/>
            <person name="Ogiwara A."/>
            <person name="Oudega B."/>
            <person name="Park S.-H."/>
            <person name="Parro V."/>
            <person name="Pohl T.M."/>
            <person name="Portetelle D."/>
            <person name="Porwollik S."/>
            <person name="Prescott A.M."/>
            <person name="Presecan E."/>
            <person name="Pujic P."/>
            <person name="Purnelle B."/>
            <person name="Rapoport G."/>
            <person name="Rey M."/>
            <person name="Reynolds S."/>
            <person name="Rieger M."/>
            <person name="Rivolta C."/>
            <person name="Rocha E."/>
            <person name="Roche B."/>
            <person name="Rose M."/>
            <person name="Sadaie Y."/>
            <person name="Sato T."/>
            <person name="Scanlan E."/>
            <person name="Schleich S."/>
            <person name="Schroeter R."/>
            <person name="Scoffone F."/>
            <person name="Sekiguchi J."/>
            <person name="Sekowska A."/>
            <person name="Seror S.J."/>
            <person name="Serror P."/>
            <person name="Shin B.-S."/>
            <person name="Soldo B."/>
            <person name="Sorokin A."/>
            <person name="Tacconi E."/>
            <person name="Takagi T."/>
            <person name="Takahashi H."/>
            <person name="Takemaru K."/>
            <person name="Takeuchi M."/>
            <person name="Tamakoshi A."/>
            <person name="Tanaka T."/>
            <person name="Terpstra P."/>
            <person name="Tognoni A."/>
            <person name="Tosato V."/>
            <person name="Uchiyama S."/>
            <person name="Vandenbol M."/>
            <person name="Vannier F."/>
            <person name="Vassarotti A."/>
            <person name="Viari A."/>
            <person name="Wambutt R."/>
            <person name="Wedler E."/>
            <person name="Wedler H."/>
            <person name="Weitzenegger T."/>
            <person name="Winters P."/>
            <person name="Wipat A."/>
            <person name="Yamamoto H."/>
            <person name="Yamane K."/>
            <person name="Yasumoto K."/>
            <person name="Yata K."/>
            <person name="Yoshida K."/>
            <person name="Yoshikawa H.-F."/>
            <person name="Zumstein E."/>
            <person name="Yoshikawa H."/>
            <person name="Danchin A."/>
        </authorList>
    </citation>
    <scope>NUCLEOTIDE SEQUENCE [LARGE SCALE GENOMIC DNA]</scope>
    <source>
        <strain>168</strain>
    </source>
</reference>
<proteinExistence type="predicted"/>
<feature type="chain" id="PRO_0000049589" description="Uncharacterized protein YitR">
    <location>
        <begin position="1"/>
        <end position="97"/>
    </location>
</feature>
<feature type="transmembrane region" description="Helical" evidence="1">
    <location>
        <begin position="5"/>
        <end position="25"/>
    </location>
</feature>
<feature type="transmembrane region" description="Helical" evidence="1">
    <location>
        <begin position="49"/>
        <end position="71"/>
    </location>
</feature>
<feature type="transmembrane region" description="Helical" evidence="1">
    <location>
        <begin position="75"/>
        <end position="92"/>
    </location>
</feature>
<protein>
    <recommendedName>
        <fullName>Uncharacterized protein YitR</fullName>
    </recommendedName>
</protein>
<accession>O06753</accession>
<dbReference type="EMBL" id="Y09476">
    <property type="protein sequence ID" value="CAA70627.1"/>
    <property type="molecule type" value="Genomic_DNA"/>
</dbReference>
<dbReference type="EMBL" id="AL009126">
    <property type="protein sequence ID" value="CAB12949.1"/>
    <property type="molecule type" value="Genomic_DNA"/>
</dbReference>
<dbReference type="PIR" id="C69841">
    <property type="entry name" value="C69841"/>
</dbReference>
<dbReference type="RefSeq" id="NP_388990.1">
    <property type="nucleotide sequence ID" value="NC_000964.3"/>
</dbReference>
<dbReference type="RefSeq" id="WP_003233021.1">
    <property type="nucleotide sequence ID" value="NZ_OZ025638.1"/>
</dbReference>
<dbReference type="SMR" id="O06753"/>
<dbReference type="FunCoup" id="O06753">
    <property type="interactions" value="15"/>
</dbReference>
<dbReference type="STRING" id="224308.BSU11090"/>
<dbReference type="PaxDb" id="224308-BSU11090"/>
<dbReference type="EnsemblBacteria" id="CAB12949">
    <property type="protein sequence ID" value="CAB12949"/>
    <property type="gene ID" value="BSU_11090"/>
</dbReference>
<dbReference type="GeneID" id="939798"/>
<dbReference type="KEGG" id="bsu:BSU11090"/>
<dbReference type="PATRIC" id="fig|224308.179.peg.1191"/>
<dbReference type="eggNOG" id="ENOG503316R">
    <property type="taxonomic scope" value="Bacteria"/>
</dbReference>
<dbReference type="InParanoid" id="O06753"/>
<dbReference type="OrthoDB" id="2652863at2"/>
<dbReference type="BioCyc" id="BSUB:BSU11090-MONOMER"/>
<dbReference type="Proteomes" id="UP000001570">
    <property type="component" value="Chromosome"/>
</dbReference>
<dbReference type="GO" id="GO:0005886">
    <property type="term" value="C:plasma membrane"/>
    <property type="evidence" value="ECO:0007669"/>
    <property type="project" value="UniProtKB-SubCell"/>
</dbReference>
<dbReference type="InterPro" id="IPR017259">
    <property type="entry name" value="UCP037672"/>
</dbReference>
<dbReference type="Pfam" id="PF12650">
    <property type="entry name" value="DUF3784"/>
    <property type="match status" value="1"/>
</dbReference>
<dbReference type="PIRSF" id="PIRSF037672">
    <property type="entry name" value="UCP037672"/>
    <property type="match status" value="1"/>
</dbReference>
<name>YITR_BACSU</name>
<evidence type="ECO:0000255" key="1"/>
<evidence type="ECO:0000305" key="2"/>
<organism>
    <name type="scientific">Bacillus subtilis (strain 168)</name>
    <dbReference type="NCBI Taxonomy" id="224308"/>
    <lineage>
        <taxon>Bacteria</taxon>
        <taxon>Bacillati</taxon>
        <taxon>Bacillota</taxon>
        <taxon>Bacilli</taxon>
        <taxon>Bacillales</taxon>
        <taxon>Bacillaceae</taxon>
        <taxon>Bacillus</taxon>
    </lineage>
</organism>
<keyword id="KW-1003">Cell membrane</keyword>
<keyword id="KW-0472">Membrane</keyword>
<keyword id="KW-1185">Reference proteome</keyword>
<keyword id="KW-0812">Transmembrane</keyword>
<keyword id="KW-1133">Transmembrane helix</keyword>
<sequence>MEISINYLLIVIALLFFVVAYFVGIKKQTWMLAGFNEARIRDKDRLARIAGYFFLNSGLFILLNSFISFQGQEQLIPPLILAYGAGVIIYVNKKLVE</sequence>